<feature type="chain" id="PRO_1000215777" description="Bifunctional protein GlmU">
    <location>
        <begin position="1"/>
        <end position="457"/>
    </location>
</feature>
<feature type="region of interest" description="Pyrophosphorylase" evidence="1">
    <location>
        <begin position="1"/>
        <end position="230"/>
    </location>
</feature>
<feature type="region of interest" description="Linker" evidence="1">
    <location>
        <begin position="231"/>
        <end position="251"/>
    </location>
</feature>
<feature type="region of interest" description="N-acetyltransferase" evidence="1">
    <location>
        <begin position="252"/>
        <end position="457"/>
    </location>
</feature>
<feature type="active site" description="Proton acceptor" evidence="1">
    <location>
        <position position="363"/>
    </location>
</feature>
<feature type="binding site" evidence="1">
    <location>
        <begin position="9"/>
        <end position="12"/>
    </location>
    <ligand>
        <name>UDP-N-acetyl-alpha-D-glucosamine</name>
        <dbReference type="ChEBI" id="CHEBI:57705"/>
    </ligand>
</feature>
<feature type="binding site" evidence="1">
    <location>
        <position position="23"/>
    </location>
    <ligand>
        <name>UDP-N-acetyl-alpha-D-glucosamine</name>
        <dbReference type="ChEBI" id="CHEBI:57705"/>
    </ligand>
</feature>
<feature type="binding site" evidence="1">
    <location>
        <position position="73"/>
    </location>
    <ligand>
        <name>UDP-N-acetyl-alpha-D-glucosamine</name>
        <dbReference type="ChEBI" id="CHEBI:57705"/>
    </ligand>
</feature>
<feature type="binding site" evidence="1">
    <location>
        <begin position="78"/>
        <end position="79"/>
    </location>
    <ligand>
        <name>UDP-N-acetyl-alpha-D-glucosamine</name>
        <dbReference type="ChEBI" id="CHEBI:57705"/>
    </ligand>
</feature>
<feature type="binding site" evidence="1">
    <location>
        <position position="103"/>
    </location>
    <ligand>
        <name>Mg(2+)</name>
        <dbReference type="ChEBI" id="CHEBI:18420"/>
    </ligand>
</feature>
<feature type="binding site" evidence="1">
    <location>
        <position position="140"/>
    </location>
    <ligand>
        <name>UDP-N-acetyl-alpha-D-glucosamine</name>
        <dbReference type="ChEBI" id="CHEBI:57705"/>
    </ligand>
</feature>
<feature type="binding site" evidence="1">
    <location>
        <position position="155"/>
    </location>
    <ligand>
        <name>UDP-N-acetyl-alpha-D-glucosamine</name>
        <dbReference type="ChEBI" id="CHEBI:57705"/>
    </ligand>
</feature>
<feature type="binding site" evidence="1">
    <location>
        <position position="170"/>
    </location>
    <ligand>
        <name>UDP-N-acetyl-alpha-D-glucosamine</name>
        <dbReference type="ChEBI" id="CHEBI:57705"/>
    </ligand>
</feature>
<feature type="binding site" evidence="1">
    <location>
        <position position="228"/>
    </location>
    <ligand>
        <name>Mg(2+)</name>
        <dbReference type="ChEBI" id="CHEBI:18420"/>
    </ligand>
</feature>
<feature type="binding site" evidence="1">
    <location>
        <position position="228"/>
    </location>
    <ligand>
        <name>UDP-N-acetyl-alpha-D-glucosamine</name>
        <dbReference type="ChEBI" id="CHEBI:57705"/>
    </ligand>
</feature>
<feature type="binding site" evidence="1">
    <location>
        <position position="333"/>
    </location>
    <ligand>
        <name>UDP-N-acetyl-alpha-D-glucosamine</name>
        <dbReference type="ChEBI" id="CHEBI:57705"/>
    </ligand>
</feature>
<feature type="binding site" evidence="1">
    <location>
        <position position="351"/>
    </location>
    <ligand>
        <name>UDP-N-acetyl-alpha-D-glucosamine</name>
        <dbReference type="ChEBI" id="CHEBI:57705"/>
    </ligand>
</feature>
<feature type="binding site" evidence="1">
    <location>
        <position position="366"/>
    </location>
    <ligand>
        <name>UDP-N-acetyl-alpha-D-glucosamine</name>
        <dbReference type="ChEBI" id="CHEBI:57705"/>
    </ligand>
</feature>
<feature type="binding site" evidence="1">
    <location>
        <position position="377"/>
    </location>
    <ligand>
        <name>UDP-N-acetyl-alpha-D-glucosamine</name>
        <dbReference type="ChEBI" id="CHEBI:57705"/>
    </ligand>
</feature>
<feature type="binding site" evidence="1">
    <location>
        <begin position="386"/>
        <end position="387"/>
    </location>
    <ligand>
        <name>acetyl-CoA</name>
        <dbReference type="ChEBI" id="CHEBI:57288"/>
    </ligand>
</feature>
<feature type="binding site" evidence="1">
    <location>
        <position position="423"/>
    </location>
    <ligand>
        <name>acetyl-CoA</name>
        <dbReference type="ChEBI" id="CHEBI:57288"/>
    </ligand>
</feature>
<feature type="binding site" evidence="1">
    <location>
        <position position="440"/>
    </location>
    <ligand>
        <name>acetyl-CoA</name>
        <dbReference type="ChEBI" id="CHEBI:57288"/>
    </ligand>
</feature>
<organism>
    <name type="scientific">Listeria monocytogenes serotype 4b (strain CLIP80459)</name>
    <dbReference type="NCBI Taxonomy" id="568819"/>
    <lineage>
        <taxon>Bacteria</taxon>
        <taxon>Bacillati</taxon>
        <taxon>Bacillota</taxon>
        <taxon>Bacilli</taxon>
        <taxon>Bacillales</taxon>
        <taxon>Listeriaceae</taxon>
        <taxon>Listeria</taxon>
    </lineage>
</organism>
<gene>
    <name evidence="1" type="primary">glmU</name>
    <name type="ordered locus">Lm4b_00195</name>
</gene>
<name>GLMU_LISMC</name>
<protein>
    <recommendedName>
        <fullName evidence="1">Bifunctional protein GlmU</fullName>
    </recommendedName>
    <domain>
        <recommendedName>
            <fullName evidence="1">UDP-N-acetylglucosamine pyrophosphorylase</fullName>
            <ecNumber evidence="1">2.7.7.23</ecNumber>
        </recommendedName>
        <alternativeName>
            <fullName evidence="1">N-acetylglucosamine-1-phosphate uridyltransferase</fullName>
        </alternativeName>
    </domain>
    <domain>
        <recommendedName>
            <fullName evidence="1">Glucosamine-1-phosphate N-acetyltransferase</fullName>
            <ecNumber evidence="1">2.3.1.157</ecNumber>
        </recommendedName>
    </domain>
</protein>
<proteinExistence type="inferred from homology"/>
<comment type="function">
    <text evidence="1">Catalyzes the last two sequential reactions in the de novo biosynthetic pathway for UDP-N-acetylglucosamine (UDP-GlcNAc). The C-terminal domain catalyzes the transfer of acetyl group from acetyl coenzyme A to glucosamine-1-phosphate (GlcN-1-P) to produce N-acetylglucosamine-1-phosphate (GlcNAc-1-P), which is converted into UDP-GlcNAc by the transfer of uridine 5-monophosphate (from uridine 5-triphosphate), a reaction catalyzed by the N-terminal domain.</text>
</comment>
<comment type="catalytic activity">
    <reaction evidence="1">
        <text>alpha-D-glucosamine 1-phosphate + acetyl-CoA = N-acetyl-alpha-D-glucosamine 1-phosphate + CoA + H(+)</text>
        <dbReference type="Rhea" id="RHEA:13725"/>
        <dbReference type="ChEBI" id="CHEBI:15378"/>
        <dbReference type="ChEBI" id="CHEBI:57287"/>
        <dbReference type="ChEBI" id="CHEBI:57288"/>
        <dbReference type="ChEBI" id="CHEBI:57776"/>
        <dbReference type="ChEBI" id="CHEBI:58516"/>
        <dbReference type="EC" id="2.3.1.157"/>
    </reaction>
</comment>
<comment type="catalytic activity">
    <reaction evidence="1">
        <text>N-acetyl-alpha-D-glucosamine 1-phosphate + UTP + H(+) = UDP-N-acetyl-alpha-D-glucosamine + diphosphate</text>
        <dbReference type="Rhea" id="RHEA:13509"/>
        <dbReference type="ChEBI" id="CHEBI:15378"/>
        <dbReference type="ChEBI" id="CHEBI:33019"/>
        <dbReference type="ChEBI" id="CHEBI:46398"/>
        <dbReference type="ChEBI" id="CHEBI:57705"/>
        <dbReference type="ChEBI" id="CHEBI:57776"/>
        <dbReference type="EC" id="2.7.7.23"/>
    </reaction>
</comment>
<comment type="cofactor">
    <cofactor evidence="1">
        <name>Mg(2+)</name>
        <dbReference type="ChEBI" id="CHEBI:18420"/>
    </cofactor>
    <text evidence="1">Binds 1 Mg(2+) ion per subunit.</text>
</comment>
<comment type="pathway">
    <text evidence="1">Nucleotide-sugar biosynthesis; UDP-N-acetyl-alpha-D-glucosamine biosynthesis; N-acetyl-alpha-D-glucosamine 1-phosphate from alpha-D-glucosamine 6-phosphate (route II): step 2/2.</text>
</comment>
<comment type="pathway">
    <text evidence="1">Nucleotide-sugar biosynthesis; UDP-N-acetyl-alpha-D-glucosamine biosynthesis; UDP-N-acetyl-alpha-D-glucosamine from N-acetyl-alpha-D-glucosamine 1-phosphate: step 1/1.</text>
</comment>
<comment type="pathway">
    <text evidence="1">Bacterial outer membrane biogenesis; LPS lipid A biosynthesis.</text>
</comment>
<comment type="subunit">
    <text evidence="1">Homotrimer.</text>
</comment>
<comment type="subcellular location">
    <subcellularLocation>
        <location evidence="1">Cytoplasm</location>
    </subcellularLocation>
</comment>
<comment type="similarity">
    <text evidence="1">In the N-terminal section; belongs to the N-acetylglucosamine-1-phosphate uridyltransferase family.</text>
</comment>
<comment type="similarity">
    <text evidence="1">In the C-terminal section; belongs to the transferase hexapeptide repeat family.</text>
</comment>
<dbReference type="EC" id="2.7.7.23" evidence="1"/>
<dbReference type="EC" id="2.3.1.157" evidence="1"/>
<dbReference type="EMBL" id="FM242711">
    <property type="protein sequence ID" value="CAS03986.1"/>
    <property type="molecule type" value="Genomic_DNA"/>
</dbReference>
<dbReference type="RefSeq" id="WP_012681027.1">
    <property type="nucleotide sequence ID" value="NC_012488.1"/>
</dbReference>
<dbReference type="SMR" id="C1KYD1"/>
<dbReference type="KEGG" id="lmc:Lm4b_00195"/>
<dbReference type="HOGENOM" id="CLU_029499_15_2_9"/>
<dbReference type="UniPathway" id="UPA00113">
    <property type="reaction ID" value="UER00532"/>
</dbReference>
<dbReference type="UniPathway" id="UPA00113">
    <property type="reaction ID" value="UER00533"/>
</dbReference>
<dbReference type="UniPathway" id="UPA00973"/>
<dbReference type="GO" id="GO:0005737">
    <property type="term" value="C:cytoplasm"/>
    <property type="evidence" value="ECO:0007669"/>
    <property type="project" value="UniProtKB-SubCell"/>
</dbReference>
<dbReference type="GO" id="GO:0016020">
    <property type="term" value="C:membrane"/>
    <property type="evidence" value="ECO:0007669"/>
    <property type="project" value="GOC"/>
</dbReference>
<dbReference type="GO" id="GO:0019134">
    <property type="term" value="F:glucosamine-1-phosphate N-acetyltransferase activity"/>
    <property type="evidence" value="ECO:0007669"/>
    <property type="project" value="UniProtKB-UniRule"/>
</dbReference>
<dbReference type="GO" id="GO:0000287">
    <property type="term" value="F:magnesium ion binding"/>
    <property type="evidence" value="ECO:0007669"/>
    <property type="project" value="UniProtKB-UniRule"/>
</dbReference>
<dbReference type="GO" id="GO:0003977">
    <property type="term" value="F:UDP-N-acetylglucosamine diphosphorylase activity"/>
    <property type="evidence" value="ECO:0007669"/>
    <property type="project" value="UniProtKB-UniRule"/>
</dbReference>
<dbReference type="GO" id="GO:0000902">
    <property type="term" value="P:cell morphogenesis"/>
    <property type="evidence" value="ECO:0007669"/>
    <property type="project" value="UniProtKB-UniRule"/>
</dbReference>
<dbReference type="GO" id="GO:0071555">
    <property type="term" value="P:cell wall organization"/>
    <property type="evidence" value="ECO:0007669"/>
    <property type="project" value="UniProtKB-KW"/>
</dbReference>
<dbReference type="GO" id="GO:0009245">
    <property type="term" value="P:lipid A biosynthetic process"/>
    <property type="evidence" value="ECO:0007669"/>
    <property type="project" value="UniProtKB-UniRule"/>
</dbReference>
<dbReference type="GO" id="GO:0009252">
    <property type="term" value="P:peptidoglycan biosynthetic process"/>
    <property type="evidence" value="ECO:0007669"/>
    <property type="project" value="UniProtKB-UniRule"/>
</dbReference>
<dbReference type="GO" id="GO:0008360">
    <property type="term" value="P:regulation of cell shape"/>
    <property type="evidence" value="ECO:0007669"/>
    <property type="project" value="UniProtKB-KW"/>
</dbReference>
<dbReference type="GO" id="GO:0006048">
    <property type="term" value="P:UDP-N-acetylglucosamine biosynthetic process"/>
    <property type="evidence" value="ECO:0007669"/>
    <property type="project" value="UniProtKB-UniPathway"/>
</dbReference>
<dbReference type="CDD" id="cd02540">
    <property type="entry name" value="GT2_GlmU_N_bac"/>
    <property type="match status" value="1"/>
</dbReference>
<dbReference type="CDD" id="cd03353">
    <property type="entry name" value="LbH_GlmU_C"/>
    <property type="match status" value="1"/>
</dbReference>
<dbReference type="Gene3D" id="2.160.10.10">
    <property type="entry name" value="Hexapeptide repeat proteins"/>
    <property type="match status" value="1"/>
</dbReference>
<dbReference type="Gene3D" id="3.90.550.10">
    <property type="entry name" value="Spore Coat Polysaccharide Biosynthesis Protein SpsA, Chain A"/>
    <property type="match status" value="1"/>
</dbReference>
<dbReference type="HAMAP" id="MF_01631">
    <property type="entry name" value="GlmU"/>
    <property type="match status" value="1"/>
</dbReference>
<dbReference type="InterPro" id="IPR005882">
    <property type="entry name" value="Bifunctional_GlmU"/>
</dbReference>
<dbReference type="InterPro" id="IPR050065">
    <property type="entry name" value="GlmU-like"/>
</dbReference>
<dbReference type="InterPro" id="IPR038009">
    <property type="entry name" value="GlmU_C_LbH"/>
</dbReference>
<dbReference type="InterPro" id="IPR001451">
    <property type="entry name" value="Hexapep"/>
</dbReference>
<dbReference type="InterPro" id="IPR018357">
    <property type="entry name" value="Hexapep_transf_CS"/>
</dbReference>
<dbReference type="InterPro" id="IPR005835">
    <property type="entry name" value="NTP_transferase_dom"/>
</dbReference>
<dbReference type="InterPro" id="IPR029044">
    <property type="entry name" value="Nucleotide-diphossugar_trans"/>
</dbReference>
<dbReference type="InterPro" id="IPR011004">
    <property type="entry name" value="Trimer_LpxA-like_sf"/>
</dbReference>
<dbReference type="NCBIfam" id="TIGR01173">
    <property type="entry name" value="glmU"/>
    <property type="match status" value="1"/>
</dbReference>
<dbReference type="NCBIfam" id="NF010934">
    <property type="entry name" value="PRK14354.1"/>
    <property type="match status" value="1"/>
</dbReference>
<dbReference type="PANTHER" id="PTHR43584:SF3">
    <property type="entry name" value="BIFUNCTIONAL PROTEIN GLMU"/>
    <property type="match status" value="1"/>
</dbReference>
<dbReference type="PANTHER" id="PTHR43584">
    <property type="entry name" value="NUCLEOTIDYL TRANSFERASE"/>
    <property type="match status" value="1"/>
</dbReference>
<dbReference type="Pfam" id="PF00132">
    <property type="entry name" value="Hexapep"/>
    <property type="match status" value="3"/>
</dbReference>
<dbReference type="Pfam" id="PF00483">
    <property type="entry name" value="NTP_transferase"/>
    <property type="match status" value="1"/>
</dbReference>
<dbReference type="SUPFAM" id="SSF53448">
    <property type="entry name" value="Nucleotide-diphospho-sugar transferases"/>
    <property type="match status" value="1"/>
</dbReference>
<dbReference type="SUPFAM" id="SSF51161">
    <property type="entry name" value="Trimeric LpxA-like enzymes"/>
    <property type="match status" value="1"/>
</dbReference>
<dbReference type="PROSITE" id="PS00101">
    <property type="entry name" value="HEXAPEP_TRANSFERASES"/>
    <property type="match status" value="1"/>
</dbReference>
<keyword id="KW-0012">Acyltransferase</keyword>
<keyword id="KW-0133">Cell shape</keyword>
<keyword id="KW-0961">Cell wall biogenesis/degradation</keyword>
<keyword id="KW-0963">Cytoplasm</keyword>
<keyword id="KW-0460">Magnesium</keyword>
<keyword id="KW-0479">Metal-binding</keyword>
<keyword id="KW-0511">Multifunctional enzyme</keyword>
<keyword id="KW-0548">Nucleotidyltransferase</keyword>
<keyword id="KW-0573">Peptidoglycan synthesis</keyword>
<keyword id="KW-0677">Repeat</keyword>
<keyword id="KW-0808">Transferase</keyword>
<reference key="1">
    <citation type="journal article" date="2012" name="BMC Genomics">
        <title>Comparative genomics and transcriptomics of lineages I, II, and III strains of Listeria monocytogenes.</title>
        <authorList>
            <person name="Hain T."/>
            <person name="Ghai R."/>
            <person name="Billion A."/>
            <person name="Kuenne C.T."/>
            <person name="Steinweg C."/>
            <person name="Izar B."/>
            <person name="Mohamed W."/>
            <person name="Mraheil M."/>
            <person name="Domann E."/>
            <person name="Schaffrath S."/>
            <person name="Karst U."/>
            <person name="Goesmann A."/>
            <person name="Oehm S."/>
            <person name="Puhler A."/>
            <person name="Merkl R."/>
            <person name="Vorwerk S."/>
            <person name="Glaser P."/>
            <person name="Garrido P."/>
            <person name="Rusniok C."/>
            <person name="Buchrieser C."/>
            <person name="Goebel W."/>
            <person name="Chakraborty T."/>
        </authorList>
    </citation>
    <scope>NUCLEOTIDE SEQUENCE [LARGE SCALE GENOMIC DNA]</scope>
    <source>
        <strain>CLIP80459</strain>
    </source>
</reference>
<accession>C1KYD1</accession>
<evidence type="ECO:0000255" key="1">
    <source>
        <dbReference type="HAMAP-Rule" id="MF_01631"/>
    </source>
</evidence>
<sequence>MSKRYAVVLAAGQGTRMKSKLYKVLHPVCGKPMVEHVVDQISTLNVDKVVTIVGHGAEKVQEHLAGKSEFVKQEEQLGTAHAVLQAKAELAGKDGVTLVVCGDTPLIEASTMEALLKYHHEKRAKATILTTVIEDPTGYGRIIRDDLGIVEKIVEHKDATEKEQRISEINTGTYCFDNKALFEALENVSNDNVQGEYYLPDVIKILKDSDEVVAAYRMESFEESLGVNDRIALAEASRLMQRRINENHMRNGVTLVNPENTYIDIDVKIGQDTVIEPGVMLRGETVIGDDCVVTSGSEIVNSVIGERVHVKTSSIFESKVGDDVQIGPYAHLRPESDIHDHVKIGNYVETKKAVVGEGTKLPHFIYMGDAEIGKNVNVGCGSIAVNYDGKNKAKTIIGDNVFVGCNSNLIAPVKVGDRAFIAAGSTITKDVPDDALGIARAKQDNKLGYAKHLNHGK</sequence>